<evidence type="ECO:0000255" key="1">
    <source>
        <dbReference type="HAMAP-Rule" id="MF_00546"/>
    </source>
</evidence>
<evidence type="ECO:0000256" key="2">
    <source>
        <dbReference type="SAM" id="MobiDB-lite"/>
    </source>
</evidence>
<proteinExistence type="inferred from homology"/>
<sequence length="121" mass="12580">MKKVLALMVAATLGLSSVAFAADTTATATPAATSTTATVAAQTKATQHQKHKVTKKTTEQKAQAAKKHEKKASVQKTPVQKAQAAKKHVKKASVQKAPVQKAQAAKKHHKTAKKPVAAPAA</sequence>
<accession>A4TL44</accession>
<feature type="signal peptide" evidence="1">
    <location>
        <begin position="1"/>
        <end position="21"/>
    </location>
</feature>
<feature type="propeptide" id="PRO_0000316047" evidence="1">
    <location>
        <begin position="22"/>
        <end position="63"/>
    </location>
</feature>
<feature type="chain" id="PRO_1000017755" description="Acid shock protein">
    <location>
        <begin position="64"/>
        <end position="121"/>
    </location>
</feature>
<feature type="region of interest" description="Disordered" evidence="2">
    <location>
        <begin position="40"/>
        <end position="121"/>
    </location>
</feature>
<feature type="compositionally biased region" description="Basic residues" evidence="2">
    <location>
        <begin position="84"/>
        <end position="93"/>
    </location>
</feature>
<feature type="compositionally biased region" description="Low complexity" evidence="2">
    <location>
        <begin position="94"/>
        <end position="103"/>
    </location>
</feature>
<feature type="compositionally biased region" description="Basic residues" evidence="2">
    <location>
        <begin position="104"/>
        <end position="113"/>
    </location>
</feature>
<gene>
    <name evidence="1" type="primary">asr</name>
    <name type="ordered locus">YPDSF_1621</name>
</gene>
<reference key="1">
    <citation type="submission" date="2007-02" db="EMBL/GenBank/DDBJ databases">
        <title>Complete sequence of chromosome of Yersinia pestis Pestoides F.</title>
        <authorList>
            <consortium name="US DOE Joint Genome Institute"/>
            <person name="Copeland A."/>
            <person name="Lucas S."/>
            <person name="Lapidus A."/>
            <person name="Barry K."/>
            <person name="Detter J.C."/>
            <person name="Glavina del Rio T."/>
            <person name="Hammon N."/>
            <person name="Israni S."/>
            <person name="Dalin E."/>
            <person name="Tice H."/>
            <person name="Pitluck S."/>
            <person name="Di Bartolo G."/>
            <person name="Chain P."/>
            <person name="Malfatti S."/>
            <person name="Shin M."/>
            <person name="Vergez L."/>
            <person name="Schmutz J."/>
            <person name="Larimer F."/>
            <person name="Land M."/>
            <person name="Hauser L."/>
            <person name="Worsham P."/>
            <person name="Chu M."/>
            <person name="Bearden S."/>
            <person name="Garcia E."/>
            <person name="Richardson P."/>
        </authorList>
    </citation>
    <scope>NUCLEOTIDE SEQUENCE [LARGE SCALE GENOMIC DNA]</scope>
    <source>
        <strain>Pestoides F</strain>
    </source>
</reference>
<name>ASR_YERPP</name>
<dbReference type="EMBL" id="CP000668">
    <property type="protein sequence ID" value="ABP40006.1"/>
    <property type="molecule type" value="Genomic_DNA"/>
</dbReference>
<dbReference type="RefSeq" id="WP_002212215.1">
    <property type="nucleotide sequence ID" value="NZ_CP009715.1"/>
</dbReference>
<dbReference type="GeneID" id="57976040"/>
<dbReference type="KEGG" id="ypp:YPDSF_1621"/>
<dbReference type="PATRIC" id="fig|386656.14.peg.2144"/>
<dbReference type="GO" id="GO:0042597">
    <property type="term" value="C:periplasmic space"/>
    <property type="evidence" value="ECO:0007669"/>
    <property type="project" value="UniProtKB-SubCell"/>
</dbReference>
<dbReference type="HAMAP" id="MF_00546">
    <property type="entry name" value="Asr"/>
    <property type="match status" value="1"/>
</dbReference>
<dbReference type="InterPro" id="IPR023497">
    <property type="entry name" value="Acid_shock"/>
</dbReference>
<dbReference type="NCBIfam" id="NF033636">
    <property type="entry name" value="acid_shock_Asr"/>
    <property type="match status" value="1"/>
</dbReference>
<dbReference type="Pfam" id="PF06392">
    <property type="entry name" value="Asr"/>
    <property type="match status" value="1"/>
</dbReference>
<organism>
    <name type="scientific">Yersinia pestis (strain Pestoides F)</name>
    <dbReference type="NCBI Taxonomy" id="386656"/>
    <lineage>
        <taxon>Bacteria</taxon>
        <taxon>Pseudomonadati</taxon>
        <taxon>Pseudomonadota</taxon>
        <taxon>Gammaproteobacteria</taxon>
        <taxon>Enterobacterales</taxon>
        <taxon>Yersiniaceae</taxon>
        <taxon>Yersinia</taxon>
    </lineage>
</organism>
<keyword id="KW-0574">Periplasm</keyword>
<keyword id="KW-0732">Signal</keyword>
<protein>
    <recommendedName>
        <fullName evidence="1">Acid shock protein</fullName>
    </recommendedName>
</protein>
<comment type="function">
    <text evidence="1">Required for growth and/or survival at acidic conditions.</text>
</comment>
<comment type="subcellular location">
    <subcellularLocation>
        <location evidence="1">Periplasm</location>
    </subcellularLocation>
</comment>
<comment type="PTM">
    <text evidence="1">Proteolytic processing gives rise to the active protein.</text>
</comment>
<comment type="similarity">
    <text evidence="1">Belongs to the Asr family.</text>
</comment>